<name>ATPG_LISMC</name>
<comment type="function">
    <text evidence="1">Produces ATP from ADP in the presence of a proton gradient across the membrane. The gamma chain is believed to be important in regulating ATPase activity and the flow of protons through the CF(0) complex.</text>
</comment>
<comment type="subunit">
    <text evidence="1">F-type ATPases have 2 components, CF(1) - the catalytic core - and CF(0) - the membrane proton channel. CF(1) has five subunits: alpha(3), beta(3), gamma(1), delta(1), epsilon(1). CF(0) has three main subunits: a, b and c.</text>
</comment>
<comment type="subcellular location">
    <subcellularLocation>
        <location evidence="1">Cell membrane</location>
        <topology evidence="1">Peripheral membrane protein</topology>
    </subcellularLocation>
</comment>
<comment type="similarity">
    <text evidence="1">Belongs to the ATPase gamma chain family.</text>
</comment>
<gene>
    <name evidence="1" type="primary">atpG</name>
    <name type="ordered locus">Lm4b_02499</name>
</gene>
<protein>
    <recommendedName>
        <fullName evidence="1">ATP synthase gamma chain</fullName>
    </recommendedName>
    <alternativeName>
        <fullName evidence="1">ATP synthase F1 sector gamma subunit</fullName>
    </alternativeName>
    <alternativeName>
        <fullName evidence="1">F-ATPase gamma subunit</fullName>
    </alternativeName>
</protein>
<evidence type="ECO:0000255" key="1">
    <source>
        <dbReference type="HAMAP-Rule" id="MF_00815"/>
    </source>
</evidence>
<sequence>MASLIDIKQRITSTRKTSQITKAMQMVSAAKLGRAESNARSYEPYVSKIKDVVTHVASTGNSSDHPMLVSRPVHRTGYIVLTSDTGLAGSYNSSVIKEVFQEINKKHTSSDEYAIITVGRSARDFFKARQMNVVLEVQGITDHPIFAEIKDIASNTVQMFEDGVYDEVFIYYNHHINSISSELRKEQLLPLTEFHEKGKETDVDLTTYEFEPSEQEILEVLLPQYVESLIFGALLDAKAAEHAARMTAMRSATDNASDLISDLSLQYNRARQAAITQEITEIVGGAAALE</sequence>
<reference key="1">
    <citation type="journal article" date="2012" name="BMC Genomics">
        <title>Comparative genomics and transcriptomics of lineages I, II, and III strains of Listeria monocytogenes.</title>
        <authorList>
            <person name="Hain T."/>
            <person name="Ghai R."/>
            <person name="Billion A."/>
            <person name="Kuenne C.T."/>
            <person name="Steinweg C."/>
            <person name="Izar B."/>
            <person name="Mohamed W."/>
            <person name="Mraheil M."/>
            <person name="Domann E."/>
            <person name="Schaffrath S."/>
            <person name="Karst U."/>
            <person name="Goesmann A."/>
            <person name="Oehm S."/>
            <person name="Puhler A."/>
            <person name="Merkl R."/>
            <person name="Vorwerk S."/>
            <person name="Glaser P."/>
            <person name="Garrido P."/>
            <person name="Rusniok C."/>
            <person name="Buchrieser C."/>
            <person name="Goebel W."/>
            <person name="Chakraborty T."/>
        </authorList>
    </citation>
    <scope>NUCLEOTIDE SEQUENCE [LARGE SCALE GENOMIC DNA]</scope>
    <source>
        <strain>CLIP80459</strain>
    </source>
</reference>
<organism>
    <name type="scientific">Listeria monocytogenes serotype 4b (strain CLIP80459)</name>
    <dbReference type="NCBI Taxonomy" id="568819"/>
    <lineage>
        <taxon>Bacteria</taxon>
        <taxon>Bacillati</taxon>
        <taxon>Bacillota</taxon>
        <taxon>Bacilli</taxon>
        <taxon>Bacillales</taxon>
        <taxon>Listeriaceae</taxon>
        <taxon>Listeria</taxon>
    </lineage>
</organism>
<keyword id="KW-0066">ATP synthesis</keyword>
<keyword id="KW-1003">Cell membrane</keyword>
<keyword id="KW-0139">CF(1)</keyword>
<keyword id="KW-0375">Hydrogen ion transport</keyword>
<keyword id="KW-0406">Ion transport</keyword>
<keyword id="KW-0472">Membrane</keyword>
<keyword id="KW-0813">Transport</keyword>
<accession>C1KYU7</accession>
<dbReference type="EMBL" id="FM242711">
    <property type="protein sequence ID" value="CAS06254.1"/>
    <property type="molecule type" value="Genomic_DNA"/>
</dbReference>
<dbReference type="RefSeq" id="WP_003723463.1">
    <property type="nucleotide sequence ID" value="NC_012488.1"/>
</dbReference>
<dbReference type="SMR" id="C1KYU7"/>
<dbReference type="KEGG" id="lmc:Lm4b_02499"/>
<dbReference type="HOGENOM" id="CLU_050669_0_1_9"/>
<dbReference type="GO" id="GO:0005886">
    <property type="term" value="C:plasma membrane"/>
    <property type="evidence" value="ECO:0007669"/>
    <property type="project" value="UniProtKB-SubCell"/>
</dbReference>
<dbReference type="GO" id="GO:0045259">
    <property type="term" value="C:proton-transporting ATP synthase complex"/>
    <property type="evidence" value="ECO:0007669"/>
    <property type="project" value="UniProtKB-KW"/>
</dbReference>
<dbReference type="GO" id="GO:0005524">
    <property type="term" value="F:ATP binding"/>
    <property type="evidence" value="ECO:0007669"/>
    <property type="project" value="UniProtKB-UniRule"/>
</dbReference>
<dbReference type="GO" id="GO:0046933">
    <property type="term" value="F:proton-transporting ATP synthase activity, rotational mechanism"/>
    <property type="evidence" value="ECO:0007669"/>
    <property type="project" value="UniProtKB-UniRule"/>
</dbReference>
<dbReference type="GO" id="GO:0042777">
    <property type="term" value="P:proton motive force-driven plasma membrane ATP synthesis"/>
    <property type="evidence" value="ECO:0007669"/>
    <property type="project" value="UniProtKB-UniRule"/>
</dbReference>
<dbReference type="CDD" id="cd12151">
    <property type="entry name" value="F1-ATPase_gamma"/>
    <property type="match status" value="1"/>
</dbReference>
<dbReference type="FunFam" id="1.10.287.80:FF:000010">
    <property type="entry name" value="ATP synthase gamma chain"/>
    <property type="match status" value="1"/>
</dbReference>
<dbReference type="FunFam" id="3.40.1380.10:FF:000002">
    <property type="entry name" value="ATP synthase gamma chain"/>
    <property type="match status" value="1"/>
</dbReference>
<dbReference type="Gene3D" id="3.40.1380.10">
    <property type="match status" value="1"/>
</dbReference>
<dbReference type="Gene3D" id="1.10.287.80">
    <property type="entry name" value="ATP synthase, gamma subunit, helix hairpin domain"/>
    <property type="match status" value="1"/>
</dbReference>
<dbReference type="HAMAP" id="MF_00815">
    <property type="entry name" value="ATP_synth_gamma_bact"/>
    <property type="match status" value="1"/>
</dbReference>
<dbReference type="InterPro" id="IPR035968">
    <property type="entry name" value="ATP_synth_F1_ATPase_gsu"/>
</dbReference>
<dbReference type="InterPro" id="IPR000131">
    <property type="entry name" value="ATP_synth_F1_gsu"/>
</dbReference>
<dbReference type="InterPro" id="IPR023632">
    <property type="entry name" value="ATP_synth_F1_gsu_CS"/>
</dbReference>
<dbReference type="NCBIfam" id="TIGR01146">
    <property type="entry name" value="ATPsyn_F1gamma"/>
    <property type="match status" value="1"/>
</dbReference>
<dbReference type="NCBIfam" id="NF004147">
    <property type="entry name" value="PRK05621.2-1"/>
    <property type="match status" value="1"/>
</dbReference>
<dbReference type="PANTHER" id="PTHR11693">
    <property type="entry name" value="ATP SYNTHASE GAMMA CHAIN"/>
    <property type="match status" value="1"/>
</dbReference>
<dbReference type="PANTHER" id="PTHR11693:SF22">
    <property type="entry name" value="ATP SYNTHASE SUBUNIT GAMMA, MITOCHONDRIAL"/>
    <property type="match status" value="1"/>
</dbReference>
<dbReference type="Pfam" id="PF00231">
    <property type="entry name" value="ATP-synt"/>
    <property type="match status" value="1"/>
</dbReference>
<dbReference type="PRINTS" id="PR00126">
    <property type="entry name" value="ATPASEGAMMA"/>
</dbReference>
<dbReference type="SUPFAM" id="SSF52943">
    <property type="entry name" value="ATP synthase (F1-ATPase), gamma subunit"/>
    <property type="match status" value="1"/>
</dbReference>
<dbReference type="PROSITE" id="PS00153">
    <property type="entry name" value="ATPASE_GAMMA"/>
    <property type="match status" value="1"/>
</dbReference>
<proteinExistence type="inferred from homology"/>
<feature type="chain" id="PRO_1000213040" description="ATP synthase gamma chain">
    <location>
        <begin position="1"/>
        <end position="290"/>
    </location>
</feature>